<dbReference type="EMBL" id="CP001144">
    <property type="protein sequence ID" value="ACH77661.1"/>
    <property type="molecule type" value="Genomic_DNA"/>
</dbReference>
<dbReference type="RefSeq" id="WP_000921391.1">
    <property type="nucleotide sequence ID" value="NC_011205.1"/>
</dbReference>
<dbReference type="SMR" id="B5FHP9"/>
<dbReference type="KEGG" id="sed:SeD_A1835"/>
<dbReference type="HOGENOM" id="CLU_117653_2_1_6"/>
<dbReference type="Proteomes" id="UP000008322">
    <property type="component" value="Chromosome"/>
</dbReference>
<dbReference type="GO" id="GO:0005886">
    <property type="term" value="C:plasma membrane"/>
    <property type="evidence" value="ECO:0007669"/>
    <property type="project" value="UniProtKB-SubCell"/>
</dbReference>
<dbReference type="HAMAP" id="MF_00010">
    <property type="entry name" value="UPF0060"/>
    <property type="match status" value="1"/>
</dbReference>
<dbReference type="InterPro" id="IPR003844">
    <property type="entry name" value="UPF0060"/>
</dbReference>
<dbReference type="NCBIfam" id="NF002586">
    <property type="entry name" value="PRK02237.1"/>
    <property type="match status" value="1"/>
</dbReference>
<dbReference type="PANTHER" id="PTHR36116">
    <property type="entry name" value="UPF0060 MEMBRANE PROTEIN YNFA"/>
    <property type="match status" value="1"/>
</dbReference>
<dbReference type="PANTHER" id="PTHR36116:SF1">
    <property type="entry name" value="UPF0060 MEMBRANE PROTEIN YNFA"/>
    <property type="match status" value="1"/>
</dbReference>
<dbReference type="Pfam" id="PF02694">
    <property type="entry name" value="UPF0060"/>
    <property type="match status" value="1"/>
</dbReference>
<dbReference type="SUPFAM" id="SSF103481">
    <property type="entry name" value="Multidrug resistance efflux transporter EmrE"/>
    <property type="match status" value="1"/>
</dbReference>
<proteinExistence type="inferred from homology"/>
<evidence type="ECO:0000255" key="1">
    <source>
        <dbReference type="HAMAP-Rule" id="MF_00010"/>
    </source>
</evidence>
<sequence length="108" mass="11935">MLKTTLLFFVTALCEIIGCFLTWLWIKRGASVWWLLPAAASLALFVWLLTLHPAASGRVYAAYGGVYVCTALLWLRVVDGVRLTVYDWCGAPIALCGMLIIVVGWGRT</sequence>
<protein>
    <recommendedName>
        <fullName evidence="1">UPF0060 membrane protein YnfA</fullName>
    </recommendedName>
</protein>
<gene>
    <name evidence="1" type="primary">ynfA</name>
    <name type="ordered locus">SeD_A1835</name>
</gene>
<feature type="chain" id="PRO_1000089255" description="UPF0060 membrane protein YnfA">
    <location>
        <begin position="1"/>
        <end position="108"/>
    </location>
</feature>
<feature type="topological domain" description="Periplasmic" evidence="1">
    <location>
        <begin position="1"/>
        <end position="5"/>
    </location>
</feature>
<feature type="transmembrane region" description="Helical" evidence="1">
    <location>
        <begin position="6"/>
        <end position="26"/>
    </location>
</feature>
<feature type="topological domain" description="Cytoplasmic" evidence="1">
    <location>
        <begin position="27"/>
        <end position="30"/>
    </location>
</feature>
<feature type="transmembrane region" description="Helical" evidence="1">
    <location>
        <begin position="31"/>
        <end position="51"/>
    </location>
</feature>
<feature type="topological domain" description="Periplasmic" evidence="1">
    <location>
        <begin position="52"/>
        <end position="60"/>
    </location>
</feature>
<feature type="transmembrane region" description="Helical" evidence="1">
    <location>
        <begin position="61"/>
        <end position="81"/>
    </location>
</feature>
<feature type="topological domain" description="Cytoplasmic" evidence="1">
    <location>
        <begin position="82"/>
        <end position="84"/>
    </location>
</feature>
<feature type="transmembrane region" description="Helical" evidence="1">
    <location>
        <begin position="85"/>
        <end position="105"/>
    </location>
</feature>
<feature type="topological domain" description="Periplasmic" evidence="1">
    <location>
        <begin position="106"/>
        <end position="108"/>
    </location>
</feature>
<organism>
    <name type="scientific">Salmonella dublin (strain CT_02021853)</name>
    <dbReference type="NCBI Taxonomy" id="439851"/>
    <lineage>
        <taxon>Bacteria</taxon>
        <taxon>Pseudomonadati</taxon>
        <taxon>Pseudomonadota</taxon>
        <taxon>Gammaproteobacteria</taxon>
        <taxon>Enterobacterales</taxon>
        <taxon>Enterobacteriaceae</taxon>
        <taxon>Salmonella</taxon>
    </lineage>
</organism>
<comment type="subcellular location">
    <subcellularLocation>
        <location evidence="1">Cell inner membrane</location>
        <topology evidence="1">Multi-pass membrane protein</topology>
    </subcellularLocation>
</comment>
<comment type="similarity">
    <text evidence="1">Belongs to the UPF0060 family.</text>
</comment>
<keyword id="KW-0997">Cell inner membrane</keyword>
<keyword id="KW-1003">Cell membrane</keyword>
<keyword id="KW-0472">Membrane</keyword>
<keyword id="KW-0812">Transmembrane</keyword>
<keyword id="KW-1133">Transmembrane helix</keyword>
<accession>B5FHP9</accession>
<reference key="1">
    <citation type="journal article" date="2011" name="J. Bacteriol.">
        <title>Comparative genomics of 28 Salmonella enterica isolates: evidence for CRISPR-mediated adaptive sublineage evolution.</title>
        <authorList>
            <person name="Fricke W.F."/>
            <person name="Mammel M.K."/>
            <person name="McDermott P.F."/>
            <person name="Tartera C."/>
            <person name="White D.G."/>
            <person name="Leclerc J.E."/>
            <person name="Ravel J."/>
            <person name="Cebula T.A."/>
        </authorList>
    </citation>
    <scope>NUCLEOTIDE SEQUENCE [LARGE SCALE GENOMIC DNA]</scope>
    <source>
        <strain>CT_02021853</strain>
    </source>
</reference>
<name>YNFA_SALDC</name>